<evidence type="ECO:0000250" key="1">
    <source>
        <dbReference type="UniProtKB" id="G7L166"/>
    </source>
</evidence>
<evidence type="ECO:0000255" key="2">
    <source>
        <dbReference type="PROSITE-ProRule" id="PRU01191"/>
    </source>
</evidence>
<evidence type="ECO:0000269" key="3">
    <source>
    </source>
</evidence>
<evidence type="ECO:0000305" key="4"/>
<evidence type="ECO:0000312" key="5">
    <source>
        <dbReference type="EMBL" id="AES69125.1"/>
    </source>
</evidence>
<evidence type="ECO:0000312" key="6">
    <source>
        <dbReference type="EMBL" id="RHN65965.1"/>
    </source>
</evidence>
<accession>G7J1L1</accession>
<feature type="chain" id="PRO_0000450026" description="GRAS family protein TF80">
    <location>
        <begin position="1"/>
        <end position="438"/>
    </location>
</feature>
<feature type="domain" description="GRAS" evidence="2">
    <location>
        <begin position="13"/>
        <end position="436"/>
    </location>
</feature>
<feature type="region of interest" description="Leucine repeat I (LRI)" evidence="2">
    <location>
        <begin position="20"/>
        <end position="81"/>
    </location>
</feature>
<feature type="region of interest" description="VHIID" evidence="2">
    <location>
        <begin position="100"/>
        <end position="165"/>
    </location>
</feature>
<feature type="region of interest" description="Leucine repeat II (LRII)" evidence="2">
    <location>
        <begin position="175"/>
        <end position="207"/>
    </location>
</feature>
<feature type="region of interest" description="PFYRE" evidence="2">
    <location>
        <begin position="216"/>
        <end position="359"/>
    </location>
</feature>
<feature type="region of interest" description="SAW" evidence="2">
    <location>
        <begin position="362"/>
        <end position="436"/>
    </location>
</feature>
<feature type="short sequence motif" description="VHIID" evidence="2">
    <location>
        <begin position="131"/>
        <end position="135"/>
    </location>
</feature>
<feature type="short sequence motif" description="LXXLL motif" evidence="2">
    <location>
        <begin position="224"/>
        <end position="228"/>
    </location>
</feature>
<reference key="1">
    <citation type="journal article" date="2011" name="Nature">
        <title>The Medicago genome provides insight into the evolution of rhizobial symbioses.</title>
        <authorList>
            <person name="Young N.D."/>
            <person name="Debelle F."/>
            <person name="Oldroyd G.E.D."/>
            <person name="Geurts R."/>
            <person name="Cannon S.B."/>
            <person name="Udvardi M.K."/>
            <person name="Benedito V.A."/>
            <person name="Mayer K.F.X."/>
            <person name="Gouzy J."/>
            <person name="Schoof H."/>
            <person name="Van de Peer Y."/>
            <person name="Proost S."/>
            <person name="Cook D.R."/>
            <person name="Meyers B.C."/>
            <person name="Spannagl M."/>
            <person name="Cheung F."/>
            <person name="De Mita S."/>
            <person name="Krishnakumar V."/>
            <person name="Gundlach H."/>
            <person name="Zhou S."/>
            <person name="Mudge J."/>
            <person name="Bharti A.K."/>
            <person name="Murray J.D."/>
            <person name="Naoumkina M.A."/>
            <person name="Rosen B."/>
            <person name="Silverstein K.A.T."/>
            <person name="Tang H."/>
            <person name="Rombauts S."/>
            <person name="Zhao P.X."/>
            <person name="Zhou P."/>
            <person name="Barbe V."/>
            <person name="Bardou P."/>
            <person name="Bechner M."/>
            <person name="Bellec A."/>
            <person name="Berger A."/>
            <person name="Berges H."/>
            <person name="Bidwell S."/>
            <person name="Bisseling T."/>
            <person name="Choisne N."/>
            <person name="Couloux A."/>
            <person name="Denny R."/>
            <person name="Deshpande S."/>
            <person name="Dai X."/>
            <person name="Doyle J.J."/>
            <person name="Dudez A.-M."/>
            <person name="Farmer A.D."/>
            <person name="Fouteau S."/>
            <person name="Franken C."/>
            <person name="Gibelin C."/>
            <person name="Gish J."/>
            <person name="Goldstein S."/>
            <person name="Gonzalez A.J."/>
            <person name="Green P.J."/>
            <person name="Hallab A."/>
            <person name="Hartog M."/>
            <person name="Hua A."/>
            <person name="Humphray S.J."/>
            <person name="Jeong D.-H."/>
            <person name="Jing Y."/>
            <person name="Jocker A."/>
            <person name="Kenton S.M."/>
            <person name="Kim D.-J."/>
            <person name="Klee K."/>
            <person name="Lai H."/>
            <person name="Lang C."/>
            <person name="Lin S."/>
            <person name="Macmil S.L."/>
            <person name="Magdelenat G."/>
            <person name="Matthews L."/>
            <person name="McCorrison J."/>
            <person name="Monaghan E.L."/>
            <person name="Mun J.-H."/>
            <person name="Najar F.Z."/>
            <person name="Nicholson C."/>
            <person name="Noirot C."/>
            <person name="O'Bleness M."/>
            <person name="Paule C.R."/>
            <person name="Poulain J."/>
            <person name="Prion F."/>
            <person name="Qin B."/>
            <person name="Qu C."/>
            <person name="Retzel E.F."/>
            <person name="Riddle C."/>
            <person name="Sallet E."/>
            <person name="Samain S."/>
            <person name="Samson N."/>
            <person name="Sanders I."/>
            <person name="Saurat O."/>
            <person name="Scarpelli C."/>
            <person name="Schiex T."/>
            <person name="Segurens B."/>
            <person name="Severin A.J."/>
            <person name="Sherrier D.J."/>
            <person name="Shi R."/>
            <person name="Sims S."/>
            <person name="Singer S.R."/>
            <person name="Sinharoy S."/>
            <person name="Sterck L."/>
            <person name="Viollet A."/>
            <person name="Wang B.-B."/>
            <person name="Wang K."/>
            <person name="Wang M."/>
            <person name="Wang X."/>
            <person name="Warfsmann J."/>
            <person name="Weissenbach J."/>
            <person name="White D.D."/>
            <person name="White J.D."/>
            <person name="Wiley G.B."/>
            <person name="Wincker P."/>
            <person name="Xing Y."/>
            <person name="Yang L."/>
            <person name="Yao Z."/>
            <person name="Ying F."/>
            <person name="Zhai J."/>
            <person name="Zhou L."/>
            <person name="Zuber A."/>
            <person name="Denarie J."/>
            <person name="Dixon R.A."/>
            <person name="May G.D."/>
            <person name="Schwartz D.C."/>
            <person name="Rogers J."/>
            <person name="Quetier F."/>
            <person name="Town C.D."/>
            <person name="Roe B.A."/>
        </authorList>
    </citation>
    <scope>NUCLEOTIDE SEQUENCE [LARGE SCALE GENOMIC DNA]</scope>
    <source>
        <strain>cv. Jemalong A17</strain>
    </source>
</reference>
<reference key="2">
    <citation type="journal article" date="2014" name="BMC Genomics">
        <title>An improved genome release (version Mt4.0) for the model legume Medicago truncatula.</title>
        <authorList>
            <person name="Tang H."/>
            <person name="Krishnakumar V."/>
            <person name="Bidwell S."/>
            <person name="Rosen B."/>
            <person name="Chan A."/>
            <person name="Zhou S."/>
            <person name="Gentzbittel L."/>
            <person name="Childs K.L."/>
            <person name="Yandell M."/>
            <person name="Gundlach H."/>
            <person name="Mayer K.F."/>
            <person name="Schwartz D.C."/>
            <person name="Town C.D."/>
        </authorList>
    </citation>
    <scope>GENOME REANNOTATION</scope>
    <source>
        <strain>cv. Jemalong A17</strain>
    </source>
</reference>
<reference key="3">
    <citation type="journal article" date="2018" name="Nat. Plants">
        <title>Whole-genome landscape of Medicago truncatula symbiotic genes.</title>
        <authorList>
            <person name="Pecrix Y."/>
            <person name="Staton S.E."/>
            <person name="Sallet E."/>
            <person name="Lelandais-Briere C."/>
            <person name="Moreau S."/>
            <person name="Carrere S."/>
            <person name="Blein T."/>
            <person name="Jardinaud M.F."/>
            <person name="Latrasse D."/>
            <person name="Zouine M."/>
            <person name="Zahm M."/>
            <person name="Kreplak J."/>
            <person name="Mayjonade B."/>
            <person name="Satge C."/>
            <person name="Perez M."/>
            <person name="Cauet S."/>
            <person name="Marande W."/>
            <person name="Chantry-Darmon C."/>
            <person name="Lopez-Roques C."/>
            <person name="Bouchez O."/>
            <person name="Berard A."/>
            <person name="Debelle F."/>
            <person name="Munos S."/>
            <person name="Bendahmane A."/>
            <person name="Berges H."/>
            <person name="Niebel A."/>
            <person name="Buitink J."/>
            <person name="Frugier F."/>
            <person name="Benhamed M."/>
            <person name="Crespi M."/>
            <person name="Gouzy J."/>
            <person name="Gamas P."/>
        </authorList>
    </citation>
    <scope>NUCLEOTIDE SEQUENCE [LARGE SCALE GENOMIC DNA]</scope>
    <source>
        <strain>cv. Jemalong A17</strain>
    </source>
</reference>
<reference key="4">
    <citation type="journal article" date="2015" name="Plant Physiol.">
        <title>Hyphal branching during arbuscule development requires reduced arbuscular mycorrhiza1.</title>
        <authorList>
            <person name="Park H.-J."/>
            <person name="Floss D.S."/>
            <person name="Levesque-Tremblay V."/>
            <person name="Bravo A."/>
            <person name="Harrison M.J."/>
        </authorList>
    </citation>
    <scope>INDUCTION BY RAM1 AND GLOMUS VERSIFORME</scope>
    <scope>INTERACTION WITH RAM1</scope>
</reference>
<protein>
    <recommendedName>
        <fullName evidence="4">GRAS family protein TF80</fullName>
    </recommendedName>
</protein>
<gene>
    <name type="primary">TF80</name>
    <name evidence="5" type="ordered locus">MTR_3g022830</name>
    <name evidence="6" type="ORF">MtrunA17_Chr3g0085681</name>
</gene>
<proteinExistence type="evidence at protein level"/>
<name>TF80_MEDTR</name>
<organism>
    <name type="scientific">Medicago truncatula</name>
    <name type="common">Barrel medic</name>
    <name type="synonym">Medicago tribuloides</name>
    <dbReference type="NCBI Taxonomy" id="3880"/>
    <lineage>
        <taxon>Eukaryota</taxon>
        <taxon>Viridiplantae</taxon>
        <taxon>Streptophyta</taxon>
        <taxon>Embryophyta</taxon>
        <taxon>Tracheophyta</taxon>
        <taxon>Spermatophyta</taxon>
        <taxon>Magnoliopsida</taxon>
        <taxon>eudicotyledons</taxon>
        <taxon>Gunneridae</taxon>
        <taxon>Pentapetalae</taxon>
        <taxon>rosids</taxon>
        <taxon>fabids</taxon>
        <taxon>Fabales</taxon>
        <taxon>Fabaceae</taxon>
        <taxon>Papilionoideae</taxon>
        <taxon>50 kb inversion clade</taxon>
        <taxon>NPAAA clade</taxon>
        <taxon>Hologalegina</taxon>
        <taxon>IRL clade</taxon>
        <taxon>Trifolieae</taxon>
        <taxon>Medicago</taxon>
    </lineage>
</organism>
<dbReference type="EMBL" id="CM001219">
    <property type="protein sequence ID" value="AES69125.1"/>
    <property type="molecule type" value="Genomic_DNA"/>
</dbReference>
<dbReference type="EMBL" id="PSQE01000003">
    <property type="protein sequence ID" value="RHN65965.1"/>
    <property type="molecule type" value="Genomic_DNA"/>
</dbReference>
<dbReference type="SMR" id="G7J1L1"/>
<dbReference type="STRING" id="3880.G7J1L1"/>
<dbReference type="PaxDb" id="3880-AES69125"/>
<dbReference type="EnsemblPlants" id="rna13873">
    <property type="protein sequence ID" value="RHN65965.1"/>
    <property type="gene ID" value="gene13873"/>
</dbReference>
<dbReference type="GeneID" id="11418331"/>
<dbReference type="Gramene" id="rna13873">
    <property type="protein sequence ID" value="RHN65965.1"/>
    <property type="gene ID" value="gene13873"/>
</dbReference>
<dbReference type="KEGG" id="mtr:11418331"/>
<dbReference type="eggNOG" id="ENOG502QPNC">
    <property type="taxonomic scope" value="Eukaryota"/>
</dbReference>
<dbReference type="HOGENOM" id="CLU_011924_0_0_1"/>
<dbReference type="OMA" id="EAMECEK"/>
<dbReference type="OrthoDB" id="762338at2759"/>
<dbReference type="Proteomes" id="UP000002051">
    <property type="component" value="Chromosome 3"/>
</dbReference>
<dbReference type="Proteomes" id="UP000265566">
    <property type="component" value="Chromosome 3"/>
</dbReference>
<dbReference type="GO" id="GO:0005634">
    <property type="term" value="C:nucleus"/>
    <property type="evidence" value="ECO:0000318"/>
    <property type="project" value="GO_Central"/>
</dbReference>
<dbReference type="GO" id="GO:0003700">
    <property type="term" value="F:DNA-binding transcription factor activity"/>
    <property type="evidence" value="ECO:0000318"/>
    <property type="project" value="GO_Central"/>
</dbReference>
<dbReference type="GO" id="GO:0043565">
    <property type="term" value="F:sequence-specific DNA binding"/>
    <property type="evidence" value="ECO:0000318"/>
    <property type="project" value="GO_Central"/>
</dbReference>
<dbReference type="GO" id="GO:0006355">
    <property type="term" value="P:regulation of DNA-templated transcription"/>
    <property type="evidence" value="ECO:0000318"/>
    <property type="project" value="GO_Central"/>
</dbReference>
<dbReference type="GO" id="GO:0009610">
    <property type="term" value="P:response to symbiotic fungus"/>
    <property type="evidence" value="ECO:0000270"/>
    <property type="project" value="UniProtKB"/>
</dbReference>
<dbReference type="InterPro" id="IPR005202">
    <property type="entry name" value="TF_GRAS"/>
</dbReference>
<dbReference type="PANTHER" id="PTHR31636">
    <property type="entry name" value="OSJNBA0084A10.13 PROTEIN-RELATED"/>
    <property type="match status" value="1"/>
</dbReference>
<dbReference type="Pfam" id="PF03514">
    <property type="entry name" value="GRAS"/>
    <property type="match status" value="1"/>
</dbReference>
<dbReference type="PROSITE" id="PS50985">
    <property type="entry name" value="GRAS"/>
    <property type="match status" value="1"/>
</dbReference>
<keyword id="KW-0539">Nucleus</keyword>
<keyword id="KW-1185">Reference proteome</keyword>
<keyword id="KW-0804">Transcription</keyword>
<keyword id="KW-0805">Transcription regulation</keyword>
<comment type="subunit">
    <text evidence="3">Interacts with RAM1.</text>
</comment>
<comment type="subcellular location">
    <subcellularLocation>
        <location evidence="1">Nucleus</location>
    </subcellularLocation>
</comment>
<comment type="induction">
    <text evidence="3">Accumulates in roots, in a RAM1-dependent manner, during colonization by arbuscular mycorrhizal fungi (e.g. Glomus versiforme).</text>
</comment>
<comment type="similarity">
    <text evidence="2">Belongs to the GRAS family.</text>
</comment>
<sequence>MDSGSPYHWLRELRYDSHGSNPMIPLIECAKCVASGSIKTADIGLEYISQISSPHGNGVQRMVTYFSEALGYKIVKHLPGVYKALNSSKISLSSDDILVQKYFYDLCPFLKFSYLITNQAIIESMEREKVVHIIDLHCSEPAQWINLIQTLKKRPGGPPFLKITGINEKKEALEQMSFHLTTEAGILDFPLQFNPIISKLEDVDFENLPVKTGDAVAISSVLQLHSLLATDDEMVSSSGAASFNMQRAAHLGQRTFAEWLERDMINAYILSPDSALSPLFLGASPKMGIFLNAMRKLQPKLLVITEQESNLNGCNLTERIDRALYFYGSLFDCLESTVTRTSVERQKLESMLLGEQIKNIITCEGVDRKERHEKLEQWIQRLKMAGFVKVPLSYNGRIEATNLLQRYSHKYKFKEENDCLLVCWSDRPLFSVSAWKFR</sequence>